<organism>
    <name type="scientific">Clostridium botulinum (strain ATCC 19397 / Type A)</name>
    <dbReference type="NCBI Taxonomy" id="441770"/>
    <lineage>
        <taxon>Bacteria</taxon>
        <taxon>Bacillati</taxon>
        <taxon>Bacillota</taxon>
        <taxon>Clostridia</taxon>
        <taxon>Eubacteriales</taxon>
        <taxon>Clostridiaceae</taxon>
        <taxon>Clostridium</taxon>
    </lineage>
</organism>
<name>PAND_CLOB1</name>
<reference key="1">
    <citation type="journal article" date="2007" name="PLoS ONE">
        <title>Analysis of the neurotoxin complex genes in Clostridium botulinum A1-A4 and B1 strains: BoNT/A3, /Ba4 and /B1 clusters are located within plasmids.</title>
        <authorList>
            <person name="Smith T.J."/>
            <person name="Hill K.K."/>
            <person name="Foley B.T."/>
            <person name="Detter J.C."/>
            <person name="Munk A.C."/>
            <person name="Bruce D.C."/>
            <person name="Doggett N.A."/>
            <person name="Smith L.A."/>
            <person name="Marks J.D."/>
            <person name="Xie G."/>
            <person name="Brettin T.S."/>
        </authorList>
    </citation>
    <scope>NUCLEOTIDE SEQUENCE [LARGE SCALE GENOMIC DNA]</scope>
    <source>
        <strain>ATCC 19397 / Type A</strain>
    </source>
</reference>
<comment type="function">
    <text evidence="1">Catalyzes the pyruvoyl-dependent decarboxylation of aspartate to produce beta-alanine.</text>
</comment>
<comment type="catalytic activity">
    <reaction evidence="1">
        <text>L-aspartate + H(+) = beta-alanine + CO2</text>
        <dbReference type="Rhea" id="RHEA:19497"/>
        <dbReference type="ChEBI" id="CHEBI:15378"/>
        <dbReference type="ChEBI" id="CHEBI:16526"/>
        <dbReference type="ChEBI" id="CHEBI:29991"/>
        <dbReference type="ChEBI" id="CHEBI:57966"/>
        <dbReference type="EC" id="4.1.1.11"/>
    </reaction>
</comment>
<comment type="cofactor">
    <cofactor evidence="1">
        <name>pyruvate</name>
        <dbReference type="ChEBI" id="CHEBI:15361"/>
    </cofactor>
    <text evidence="1">Binds 1 pyruvoyl group covalently per subunit.</text>
</comment>
<comment type="pathway">
    <text evidence="1">Cofactor biosynthesis; (R)-pantothenate biosynthesis; beta-alanine from L-aspartate: step 1/1.</text>
</comment>
<comment type="subunit">
    <text evidence="1">Heterooctamer of four alpha and four beta subunits.</text>
</comment>
<comment type="subcellular location">
    <subcellularLocation>
        <location evidence="1">Cytoplasm</location>
    </subcellularLocation>
</comment>
<comment type="PTM">
    <text evidence="1">Is synthesized initially as an inactive proenzyme, which is activated by self-cleavage at a specific serine bond to produce a beta-subunit with a hydroxyl group at its C-terminus and an alpha-subunit with a pyruvoyl group at its N-terminus.</text>
</comment>
<comment type="similarity">
    <text evidence="1">Belongs to the PanD family.</text>
</comment>
<sequence>MTITMLKSKIHRATVTEANLNYVGSITIDKYLMDKANILEYEKVQIVDIDNGNRFETYVIAGEKHSDVICLNGAAARMVQKGDKIIIMSYCSLTIDEANKFNPTVLFVDNKNNIEKLTNYEKHGEII</sequence>
<proteinExistence type="inferred from homology"/>
<keyword id="KW-0068">Autocatalytic cleavage</keyword>
<keyword id="KW-0963">Cytoplasm</keyword>
<keyword id="KW-0210">Decarboxylase</keyword>
<keyword id="KW-0456">Lyase</keyword>
<keyword id="KW-0566">Pantothenate biosynthesis</keyword>
<keyword id="KW-0670">Pyruvate</keyword>
<keyword id="KW-0704">Schiff base</keyword>
<keyword id="KW-0865">Zymogen</keyword>
<gene>
    <name evidence="1" type="primary">panD</name>
    <name type="ordered locus">CLB_0456</name>
</gene>
<protein>
    <recommendedName>
        <fullName evidence="1">Aspartate 1-decarboxylase</fullName>
        <ecNumber evidence="1">4.1.1.11</ecNumber>
    </recommendedName>
    <alternativeName>
        <fullName evidence="1">Aspartate alpha-decarboxylase</fullName>
    </alternativeName>
    <component>
        <recommendedName>
            <fullName evidence="1">Aspartate 1-decarboxylase beta chain</fullName>
        </recommendedName>
    </component>
    <component>
        <recommendedName>
            <fullName evidence="1">Aspartate 1-decarboxylase alpha chain</fullName>
        </recommendedName>
    </component>
</protein>
<dbReference type="EC" id="4.1.1.11" evidence="1"/>
<dbReference type="EMBL" id="CP000726">
    <property type="protein sequence ID" value="ABS33160.1"/>
    <property type="molecule type" value="Genomic_DNA"/>
</dbReference>
<dbReference type="RefSeq" id="WP_011986119.1">
    <property type="nucleotide sequence ID" value="NC_009697.1"/>
</dbReference>
<dbReference type="SMR" id="A7FR58"/>
<dbReference type="KEGG" id="cba:CLB_0456"/>
<dbReference type="HOGENOM" id="CLU_115305_2_0_9"/>
<dbReference type="UniPathway" id="UPA00028">
    <property type="reaction ID" value="UER00002"/>
</dbReference>
<dbReference type="GO" id="GO:0005829">
    <property type="term" value="C:cytosol"/>
    <property type="evidence" value="ECO:0007669"/>
    <property type="project" value="TreeGrafter"/>
</dbReference>
<dbReference type="GO" id="GO:0004068">
    <property type="term" value="F:aspartate 1-decarboxylase activity"/>
    <property type="evidence" value="ECO:0007669"/>
    <property type="project" value="UniProtKB-UniRule"/>
</dbReference>
<dbReference type="GO" id="GO:0006523">
    <property type="term" value="P:alanine biosynthetic process"/>
    <property type="evidence" value="ECO:0007669"/>
    <property type="project" value="InterPro"/>
</dbReference>
<dbReference type="GO" id="GO:0015940">
    <property type="term" value="P:pantothenate biosynthetic process"/>
    <property type="evidence" value="ECO:0007669"/>
    <property type="project" value="UniProtKB-UniRule"/>
</dbReference>
<dbReference type="CDD" id="cd06919">
    <property type="entry name" value="Asp_decarbox"/>
    <property type="match status" value="1"/>
</dbReference>
<dbReference type="Gene3D" id="2.40.40.20">
    <property type="match status" value="1"/>
</dbReference>
<dbReference type="HAMAP" id="MF_00446">
    <property type="entry name" value="PanD"/>
    <property type="match status" value="1"/>
</dbReference>
<dbReference type="InterPro" id="IPR009010">
    <property type="entry name" value="Asp_de-COase-like_dom_sf"/>
</dbReference>
<dbReference type="InterPro" id="IPR003190">
    <property type="entry name" value="Asp_decarbox"/>
</dbReference>
<dbReference type="NCBIfam" id="TIGR00223">
    <property type="entry name" value="panD"/>
    <property type="match status" value="1"/>
</dbReference>
<dbReference type="PANTHER" id="PTHR21012">
    <property type="entry name" value="ASPARTATE 1-DECARBOXYLASE"/>
    <property type="match status" value="1"/>
</dbReference>
<dbReference type="PANTHER" id="PTHR21012:SF0">
    <property type="entry name" value="ASPARTATE 1-DECARBOXYLASE"/>
    <property type="match status" value="1"/>
</dbReference>
<dbReference type="Pfam" id="PF02261">
    <property type="entry name" value="Asp_decarbox"/>
    <property type="match status" value="1"/>
</dbReference>
<dbReference type="PIRSF" id="PIRSF006246">
    <property type="entry name" value="Asp_decarbox"/>
    <property type="match status" value="1"/>
</dbReference>
<dbReference type="SUPFAM" id="SSF50692">
    <property type="entry name" value="ADC-like"/>
    <property type="match status" value="1"/>
</dbReference>
<feature type="chain" id="PRO_1000026172" description="Aspartate 1-decarboxylase beta chain" evidence="1">
    <location>
        <begin position="1"/>
        <end position="24"/>
    </location>
</feature>
<feature type="chain" id="PRO_0000316063" description="Aspartate 1-decarboxylase alpha chain" evidence="1">
    <location>
        <begin position="25"/>
        <end position="127"/>
    </location>
</feature>
<feature type="active site" description="Schiff-base intermediate with substrate; via pyruvic acid" evidence="1">
    <location>
        <position position="25"/>
    </location>
</feature>
<feature type="active site" description="Proton donor" evidence="1">
    <location>
        <position position="58"/>
    </location>
</feature>
<feature type="binding site" evidence="1">
    <location>
        <position position="57"/>
    </location>
    <ligand>
        <name>substrate</name>
    </ligand>
</feature>
<feature type="binding site" evidence="1">
    <location>
        <begin position="73"/>
        <end position="75"/>
    </location>
    <ligand>
        <name>substrate</name>
    </ligand>
</feature>
<feature type="modified residue" description="Pyruvic acid (Ser)" evidence="1">
    <location>
        <position position="25"/>
    </location>
</feature>
<accession>A7FR58</accession>
<evidence type="ECO:0000255" key="1">
    <source>
        <dbReference type="HAMAP-Rule" id="MF_00446"/>
    </source>
</evidence>